<keyword id="KW-0240">DNA-directed RNA polymerase</keyword>
<keyword id="KW-0548">Nucleotidyltransferase</keyword>
<keyword id="KW-0804">Transcription</keyword>
<keyword id="KW-0808">Transferase</keyword>
<feature type="chain" id="PRO_0000175383" description="DNA-directed RNA polymerase subunit alpha">
    <location>
        <begin position="1"/>
        <end position="314"/>
    </location>
</feature>
<feature type="region of interest" description="Alpha N-terminal domain (alpha-NTD)" evidence="1">
    <location>
        <begin position="1"/>
        <end position="228"/>
    </location>
</feature>
<feature type="region of interest" description="Alpha C-terminal domain (alpha-CTD)" evidence="1">
    <location>
        <begin position="245"/>
        <end position="314"/>
    </location>
</feature>
<evidence type="ECO:0000255" key="1">
    <source>
        <dbReference type="HAMAP-Rule" id="MF_00059"/>
    </source>
</evidence>
<name>RPOA_STAAS</name>
<reference key="1">
    <citation type="journal article" date="2004" name="Proc. Natl. Acad. Sci. U.S.A.">
        <title>Complete genomes of two clinical Staphylococcus aureus strains: evidence for the rapid evolution of virulence and drug resistance.</title>
        <authorList>
            <person name="Holden M.T.G."/>
            <person name="Feil E.J."/>
            <person name="Lindsay J.A."/>
            <person name="Peacock S.J."/>
            <person name="Day N.P.J."/>
            <person name="Enright M.C."/>
            <person name="Foster T.J."/>
            <person name="Moore C.E."/>
            <person name="Hurst L."/>
            <person name="Atkin R."/>
            <person name="Barron A."/>
            <person name="Bason N."/>
            <person name="Bentley S.D."/>
            <person name="Chillingworth C."/>
            <person name="Chillingworth T."/>
            <person name="Churcher C."/>
            <person name="Clark L."/>
            <person name="Corton C."/>
            <person name="Cronin A."/>
            <person name="Doggett J."/>
            <person name="Dowd L."/>
            <person name="Feltwell T."/>
            <person name="Hance Z."/>
            <person name="Harris B."/>
            <person name="Hauser H."/>
            <person name="Holroyd S."/>
            <person name="Jagels K."/>
            <person name="James K.D."/>
            <person name="Lennard N."/>
            <person name="Line A."/>
            <person name="Mayes R."/>
            <person name="Moule S."/>
            <person name="Mungall K."/>
            <person name="Ormond D."/>
            <person name="Quail M.A."/>
            <person name="Rabbinowitsch E."/>
            <person name="Rutherford K.M."/>
            <person name="Sanders M."/>
            <person name="Sharp S."/>
            <person name="Simmonds M."/>
            <person name="Stevens K."/>
            <person name="Whitehead S."/>
            <person name="Barrell B.G."/>
            <person name="Spratt B.G."/>
            <person name="Parkhill J."/>
        </authorList>
    </citation>
    <scope>NUCLEOTIDE SEQUENCE [LARGE SCALE GENOMIC DNA]</scope>
    <source>
        <strain>MSSA476</strain>
    </source>
</reference>
<dbReference type="EC" id="2.7.7.6" evidence="1"/>
<dbReference type="EMBL" id="BX571857">
    <property type="protein sequence ID" value="CAG43926.1"/>
    <property type="molecule type" value="Genomic_DNA"/>
</dbReference>
<dbReference type="RefSeq" id="WP_000569649.1">
    <property type="nucleotide sequence ID" value="NC_002953.3"/>
</dbReference>
<dbReference type="SMR" id="Q6G797"/>
<dbReference type="KEGG" id="sas:SAS2115"/>
<dbReference type="HOGENOM" id="CLU_053084_0_1_9"/>
<dbReference type="GO" id="GO:0005737">
    <property type="term" value="C:cytoplasm"/>
    <property type="evidence" value="ECO:0007669"/>
    <property type="project" value="UniProtKB-ARBA"/>
</dbReference>
<dbReference type="GO" id="GO:0000428">
    <property type="term" value="C:DNA-directed RNA polymerase complex"/>
    <property type="evidence" value="ECO:0007669"/>
    <property type="project" value="UniProtKB-KW"/>
</dbReference>
<dbReference type="GO" id="GO:0003677">
    <property type="term" value="F:DNA binding"/>
    <property type="evidence" value="ECO:0007669"/>
    <property type="project" value="UniProtKB-UniRule"/>
</dbReference>
<dbReference type="GO" id="GO:0003899">
    <property type="term" value="F:DNA-directed RNA polymerase activity"/>
    <property type="evidence" value="ECO:0007669"/>
    <property type="project" value="UniProtKB-UniRule"/>
</dbReference>
<dbReference type="GO" id="GO:0046983">
    <property type="term" value="F:protein dimerization activity"/>
    <property type="evidence" value="ECO:0007669"/>
    <property type="project" value="InterPro"/>
</dbReference>
<dbReference type="GO" id="GO:0006351">
    <property type="term" value="P:DNA-templated transcription"/>
    <property type="evidence" value="ECO:0007669"/>
    <property type="project" value="UniProtKB-UniRule"/>
</dbReference>
<dbReference type="CDD" id="cd06928">
    <property type="entry name" value="RNAP_alpha_NTD"/>
    <property type="match status" value="1"/>
</dbReference>
<dbReference type="FunFam" id="1.10.150.20:FF:000001">
    <property type="entry name" value="DNA-directed RNA polymerase subunit alpha"/>
    <property type="match status" value="1"/>
</dbReference>
<dbReference type="FunFam" id="2.170.120.12:FF:000001">
    <property type="entry name" value="DNA-directed RNA polymerase subunit alpha"/>
    <property type="match status" value="1"/>
</dbReference>
<dbReference type="Gene3D" id="1.10.150.20">
    <property type="entry name" value="5' to 3' exonuclease, C-terminal subdomain"/>
    <property type="match status" value="1"/>
</dbReference>
<dbReference type="Gene3D" id="2.170.120.12">
    <property type="entry name" value="DNA-directed RNA polymerase, insert domain"/>
    <property type="match status" value="1"/>
</dbReference>
<dbReference type="Gene3D" id="3.30.1360.10">
    <property type="entry name" value="RNA polymerase, RBP11-like subunit"/>
    <property type="match status" value="1"/>
</dbReference>
<dbReference type="HAMAP" id="MF_00059">
    <property type="entry name" value="RNApol_bact_RpoA"/>
    <property type="match status" value="1"/>
</dbReference>
<dbReference type="InterPro" id="IPR011262">
    <property type="entry name" value="DNA-dir_RNA_pol_insert"/>
</dbReference>
<dbReference type="InterPro" id="IPR011263">
    <property type="entry name" value="DNA-dir_RNA_pol_RpoA/D/Rpb3"/>
</dbReference>
<dbReference type="InterPro" id="IPR011773">
    <property type="entry name" value="DNA-dir_RpoA"/>
</dbReference>
<dbReference type="InterPro" id="IPR036603">
    <property type="entry name" value="RBP11-like"/>
</dbReference>
<dbReference type="InterPro" id="IPR011260">
    <property type="entry name" value="RNAP_asu_C"/>
</dbReference>
<dbReference type="InterPro" id="IPR036643">
    <property type="entry name" value="RNApol_insert_sf"/>
</dbReference>
<dbReference type="NCBIfam" id="NF003513">
    <property type="entry name" value="PRK05182.1-2"/>
    <property type="match status" value="1"/>
</dbReference>
<dbReference type="NCBIfam" id="NF003515">
    <property type="entry name" value="PRK05182.2-1"/>
    <property type="match status" value="1"/>
</dbReference>
<dbReference type="NCBIfam" id="NF003519">
    <property type="entry name" value="PRK05182.2-5"/>
    <property type="match status" value="1"/>
</dbReference>
<dbReference type="NCBIfam" id="TIGR02027">
    <property type="entry name" value="rpoA"/>
    <property type="match status" value="1"/>
</dbReference>
<dbReference type="Pfam" id="PF01000">
    <property type="entry name" value="RNA_pol_A_bac"/>
    <property type="match status" value="1"/>
</dbReference>
<dbReference type="Pfam" id="PF03118">
    <property type="entry name" value="RNA_pol_A_CTD"/>
    <property type="match status" value="1"/>
</dbReference>
<dbReference type="Pfam" id="PF01193">
    <property type="entry name" value="RNA_pol_L"/>
    <property type="match status" value="1"/>
</dbReference>
<dbReference type="SMART" id="SM00662">
    <property type="entry name" value="RPOLD"/>
    <property type="match status" value="1"/>
</dbReference>
<dbReference type="SUPFAM" id="SSF47789">
    <property type="entry name" value="C-terminal domain of RNA polymerase alpha subunit"/>
    <property type="match status" value="1"/>
</dbReference>
<dbReference type="SUPFAM" id="SSF56553">
    <property type="entry name" value="Insert subdomain of RNA polymerase alpha subunit"/>
    <property type="match status" value="1"/>
</dbReference>
<dbReference type="SUPFAM" id="SSF55257">
    <property type="entry name" value="RBP11-like subunits of RNA polymerase"/>
    <property type="match status" value="1"/>
</dbReference>
<organism>
    <name type="scientific">Staphylococcus aureus (strain MSSA476)</name>
    <dbReference type="NCBI Taxonomy" id="282459"/>
    <lineage>
        <taxon>Bacteria</taxon>
        <taxon>Bacillati</taxon>
        <taxon>Bacillota</taxon>
        <taxon>Bacilli</taxon>
        <taxon>Bacillales</taxon>
        <taxon>Staphylococcaceae</taxon>
        <taxon>Staphylococcus</taxon>
    </lineage>
</organism>
<accession>Q6G797</accession>
<comment type="function">
    <text evidence="1">DNA-dependent RNA polymerase catalyzes the transcription of DNA into RNA using the four ribonucleoside triphosphates as substrates.</text>
</comment>
<comment type="catalytic activity">
    <reaction evidence="1">
        <text>RNA(n) + a ribonucleoside 5'-triphosphate = RNA(n+1) + diphosphate</text>
        <dbReference type="Rhea" id="RHEA:21248"/>
        <dbReference type="Rhea" id="RHEA-COMP:14527"/>
        <dbReference type="Rhea" id="RHEA-COMP:17342"/>
        <dbReference type="ChEBI" id="CHEBI:33019"/>
        <dbReference type="ChEBI" id="CHEBI:61557"/>
        <dbReference type="ChEBI" id="CHEBI:140395"/>
        <dbReference type="EC" id="2.7.7.6"/>
    </reaction>
</comment>
<comment type="subunit">
    <text evidence="1">Homodimer. The RNAP catalytic core consists of 2 alpha, 1 beta, 1 beta' and 1 omega subunit. When a sigma factor is associated with the core the holoenzyme is formed, which can initiate transcription.</text>
</comment>
<comment type="domain">
    <text evidence="1">The N-terminal domain is essential for RNAP assembly and basal transcription, whereas the C-terminal domain is involved in interaction with transcriptional regulators and with upstream promoter elements.</text>
</comment>
<comment type="similarity">
    <text evidence="1">Belongs to the RNA polymerase alpha chain family.</text>
</comment>
<proteinExistence type="inferred from homology"/>
<protein>
    <recommendedName>
        <fullName evidence="1">DNA-directed RNA polymerase subunit alpha</fullName>
        <shortName evidence="1">RNAP subunit alpha</shortName>
        <ecNumber evidence="1">2.7.7.6</ecNumber>
    </recommendedName>
    <alternativeName>
        <fullName evidence="1">RNA polymerase subunit alpha</fullName>
    </alternativeName>
    <alternativeName>
        <fullName evidence="1">Transcriptase subunit alpha</fullName>
    </alternativeName>
</protein>
<gene>
    <name evidence="1" type="primary">rpoA</name>
    <name type="ordered locus">SAS2115</name>
</gene>
<sequence>MIEIEKPRIETIEISEDAKFGKFVVEPLERGYGTTLGNSLRRILLSSLPGAAVKYIEIEGVLHEFSAVDNVVEDVSTIIMNIKQLALKIYSEEDKTLEIDVRDEGEVTASDITHDSDVEILNPELKIATVSKGGHLKIRLVANKGRGYALAEQNNTSDLPIGVIPVDSLYSPVERVNYTVENTRVGQSSDFDKLTLDVWTNGSITPQESVSLAAKIMTEHLNIFVGLTDEAQNAEIMIEKEEDQKEKVLEMSIEELDLSVRSYNCLKRAGINSVQELADKSEADMMKVRNLGRKSLEEVKYKLEDLGLGLRKED</sequence>